<sequence>MAQRVQEEDEQMMSTDDLIQAQIKLYHHCFAFIKSTALWAAIDLRIADVIHRNGGAATLSDLALNVGLHPTKLSHLRRLMRVLTVTGIFAVEDRNGEAMYTLTRVSRLLLNSDGEGTHALSQMARVLANPLAVISHFSIHEWFTTEKATTMTPFEVAHGCTRWEMIANDAKDGSVFNAGMVEDSRVAMDIILKESCGIFQGISSLIDVGGGHGAAAAAIATAFPNIKCTVLDLPHIVAEAPATHSNIQFIGGDLFKFIPAADVVLLKCLLHCWQDDDCVKILRLCKEAIPARDAGGKVIIIEVVVGIGSEEIVPKEMQLLFDVFMMYIDGIEREEYEWKKIFLEAGFSDYKITPVLGARSIIEVYP</sequence>
<protein>
    <recommendedName>
        <fullName evidence="9">Acetylserotonin O-methyltransferase 2</fullName>
        <shortName evidence="8">OsASMT2</shortName>
        <ecNumber evidence="5">2.1.1.4</ecNumber>
    </recommendedName>
</protein>
<organism>
    <name type="scientific">Oryza sativa subsp. japonica</name>
    <name type="common">Rice</name>
    <dbReference type="NCBI Taxonomy" id="39947"/>
    <lineage>
        <taxon>Eukaryota</taxon>
        <taxon>Viridiplantae</taxon>
        <taxon>Streptophyta</taxon>
        <taxon>Embryophyta</taxon>
        <taxon>Tracheophyta</taxon>
        <taxon>Spermatophyta</taxon>
        <taxon>Magnoliopsida</taxon>
        <taxon>Liliopsida</taxon>
        <taxon>Poales</taxon>
        <taxon>Poaceae</taxon>
        <taxon>BOP clade</taxon>
        <taxon>Oryzoideae</taxon>
        <taxon>Oryzeae</taxon>
        <taxon>Oryzinae</taxon>
        <taxon>Oryza</taxon>
        <taxon>Oryza sativa</taxon>
    </lineage>
</organism>
<feature type="chain" id="PRO_0000437948" description="Acetylserotonin O-methyltransferase 2">
    <location>
        <begin position="1"/>
        <end position="366"/>
    </location>
</feature>
<feature type="active site" description="Proton acceptor" evidence="4">
    <location>
        <position position="271"/>
    </location>
</feature>
<feature type="active site" evidence="1">
    <location>
        <position position="302"/>
    </location>
</feature>
<feature type="active site" evidence="1">
    <location>
        <position position="332"/>
    </location>
</feature>
<feature type="binding site" evidence="2">
    <location>
        <position position="209"/>
    </location>
    <ligand>
        <name>S-adenosyl-L-homocysteine</name>
        <dbReference type="ChEBI" id="CHEBI:57856"/>
    </ligand>
</feature>
<feature type="binding site" evidence="2">
    <location>
        <position position="232"/>
    </location>
    <ligand>
        <name>S-adenosyl-L-homocysteine</name>
        <dbReference type="ChEBI" id="CHEBI:57856"/>
    </ligand>
</feature>
<feature type="binding site" evidence="2">
    <location>
        <position position="253"/>
    </location>
    <ligand>
        <name>S-adenosyl-L-homocysteine</name>
        <dbReference type="ChEBI" id="CHEBI:57856"/>
    </ligand>
</feature>
<feature type="binding site" evidence="2">
    <location>
        <position position="267"/>
    </location>
    <ligand>
        <name>S-adenosyl-L-homocysteine</name>
        <dbReference type="ChEBI" id="CHEBI:57856"/>
    </ligand>
</feature>
<dbReference type="EC" id="2.1.1.4" evidence="5"/>
<dbReference type="EMBL" id="AC079037">
    <property type="protein sequence ID" value="AAL34948.1"/>
    <property type="molecule type" value="Genomic_DNA"/>
</dbReference>
<dbReference type="EMBL" id="AC079179">
    <property type="protein sequence ID" value="AAL31649.1"/>
    <property type="molecule type" value="Genomic_DNA"/>
</dbReference>
<dbReference type="EMBL" id="DP000086">
    <property type="protein sequence ID" value="AAP51892.1"/>
    <property type="molecule type" value="Genomic_DNA"/>
</dbReference>
<dbReference type="EMBL" id="AP008216">
    <property type="protein sequence ID" value="BAF25973.1"/>
    <property type="molecule type" value="Genomic_DNA"/>
</dbReference>
<dbReference type="EMBL" id="AP014966">
    <property type="protein sequence ID" value="BAT09682.1"/>
    <property type="status" value="ALT_SEQ"/>
    <property type="molecule type" value="Genomic_DNA"/>
</dbReference>
<dbReference type="EMBL" id="CM000147">
    <property type="protein sequence ID" value="EAZ15134.1"/>
    <property type="molecule type" value="Genomic_DNA"/>
</dbReference>
<dbReference type="EMBL" id="AK069308">
    <property type="protein sequence ID" value="BAG91369.1"/>
    <property type="molecule type" value="mRNA"/>
</dbReference>
<dbReference type="SMR" id="Q8VWJ6"/>
<dbReference type="FunCoup" id="Q8VWJ6">
    <property type="interactions" value="293"/>
</dbReference>
<dbReference type="STRING" id="39947.Q8VWJ6"/>
<dbReference type="PaxDb" id="39947-Q8VWJ6"/>
<dbReference type="KEGG" id="dosa:Os10g0118200"/>
<dbReference type="KEGG" id="osa:4347994"/>
<dbReference type="InParanoid" id="Q8VWJ6"/>
<dbReference type="OrthoDB" id="613486at2759"/>
<dbReference type="UniPathway" id="UPA00837">
    <property type="reaction ID" value="UER00815"/>
</dbReference>
<dbReference type="Proteomes" id="UP000000763">
    <property type="component" value="Chromosome 10"/>
</dbReference>
<dbReference type="Proteomes" id="UP000007752">
    <property type="component" value="Chromosome 10"/>
</dbReference>
<dbReference type="Proteomes" id="UP000059680">
    <property type="component" value="Chromosome 10"/>
</dbReference>
<dbReference type="GO" id="GO:0005737">
    <property type="term" value="C:cytoplasm"/>
    <property type="evidence" value="ECO:0000314"/>
    <property type="project" value="UniProtKB"/>
</dbReference>
<dbReference type="GO" id="GO:0017096">
    <property type="term" value="F:acetylserotonin O-methyltransferase activity"/>
    <property type="evidence" value="ECO:0000314"/>
    <property type="project" value="UniProtKB"/>
</dbReference>
<dbReference type="GO" id="GO:0008171">
    <property type="term" value="F:O-methyltransferase activity"/>
    <property type="evidence" value="ECO:0000318"/>
    <property type="project" value="GO_Central"/>
</dbReference>
<dbReference type="GO" id="GO:0046983">
    <property type="term" value="F:protein dimerization activity"/>
    <property type="evidence" value="ECO:0007669"/>
    <property type="project" value="InterPro"/>
</dbReference>
<dbReference type="GO" id="GO:0008757">
    <property type="term" value="F:S-adenosylmethionine-dependent methyltransferase activity"/>
    <property type="evidence" value="ECO:0000318"/>
    <property type="project" value="GO_Central"/>
</dbReference>
<dbReference type="GO" id="GO:0009058">
    <property type="term" value="P:biosynthetic process"/>
    <property type="evidence" value="ECO:0000318"/>
    <property type="project" value="GO_Central"/>
</dbReference>
<dbReference type="GO" id="GO:0030187">
    <property type="term" value="P:melatonin biosynthetic process"/>
    <property type="evidence" value="ECO:0000314"/>
    <property type="project" value="UniProtKB"/>
</dbReference>
<dbReference type="GO" id="GO:0032259">
    <property type="term" value="P:methylation"/>
    <property type="evidence" value="ECO:0000318"/>
    <property type="project" value="GO_Central"/>
</dbReference>
<dbReference type="FunFam" id="1.10.10.10:FF:000292">
    <property type="entry name" value="O-methyltransferase ZRP4"/>
    <property type="match status" value="1"/>
</dbReference>
<dbReference type="FunFam" id="3.40.50.150:FF:000057">
    <property type="entry name" value="O-methyltransferase ZRP4"/>
    <property type="match status" value="1"/>
</dbReference>
<dbReference type="Gene3D" id="3.40.50.150">
    <property type="entry name" value="Vaccinia Virus protein VP39"/>
    <property type="match status" value="1"/>
</dbReference>
<dbReference type="Gene3D" id="1.10.10.10">
    <property type="entry name" value="Winged helix-like DNA-binding domain superfamily/Winged helix DNA-binding domain"/>
    <property type="match status" value="1"/>
</dbReference>
<dbReference type="InterPro" id="IPR016461">
    <property type="entry name" value="COMT-like"/>
</dbReference>
<dbReference type="InterPro" id="IPR001077">
    <property type="entry name" value="O_MeTrfase_dom"/>
</dbReference>
<dbReference type="InterPro" id="IPR012967">
    <property type="entry name" value="Plant_O-MeTrfase_dimerisation"/>
</dbReference>
<dbReference type="InterPro" id="IPR029063">
    <property type="entry name" value="SAM-dependent_MTases_sf"/>
</dbReference>
<dbReference type="InterPro" id="IPR036388">
    <property type="entry name" value="WH-like_DNA-bd_sf"/>
</dbReference>
<dbReference type="InterPro" id="IPR036390">
    <property type="entry name" value="WH_DNA-bd_sf"/>
</dbReference>
<dbReference type="PANTHER" id="PTHR11746">
    <property type="entry name" value="O-METHYLTRANSFERASE"/>
    <property type="match status" value="1"/>
</dbReference>
<dbReference type="Pfam" id="PF08100">
    <property type="entry name" value="Dimerisation"/>
    <property type="match status" value="1"/>
</dbReference>
<dbReference type="Pfam" id="PF00891">
    <property type="entry name" value="Methyltransf_2"/>
    <property type="match status" value="1"/>
</dbReference>
<dbReference type="PIRSF" id="PIRSF005739">
    <property type="entry name" value="O-mtase"/>
    <property type="match status" value="1"/>
</dbReference>
<dbReference type="SUPFAM" id="SSF53335">
    <property type="entry name" value="S-adenosyl-L-methionine-dependent methyltransferases"/>
    <property type="match status" value="1"/>
</dbReference>
<dbReference type="SUPFAM" id="SSF46785">
    <property type="entry name" value="Winged helix' DNA-binding domain"/>
    <property type="match status" value="1"/>
</dbReference>
<dbReference type="PROSITE" id="PS51683">
    <property type="entry name" value="SAM_OMT_II"/>
    <property type="match status" value="1"/>
</dbReference>
<accession>Q8VWJ6</accession>
<accession>A0A0N7KRD1</accession>
<accession>Q7XH62</accession>
<name>ASMT2_ORYSJ</name>
<gene>
    <name evidence="7" type="primary">ASMT2</name>
    <name evidence="13" type="ordered locus">Os10g0118200</name>
    <name evidence="12" type="ordered locus">LOC_Os10g02880</name>
    <name evidence="14" type="ORF">OsJ_30548</name>
    <name evidence="11" type="ORF">OSJNBa0023I19.21</name>
    <name evidence="10" type="ORF">OSJNBa0079B05.4</name>
</gene>
<proteinExistence type="evidence at protein level"/>
<reference key="1">
    <citation type="journal article" date="2003" name="Science">
        <title>In-depth view of structure, activity, and evolution of rice chromosome 10.</title>
        <authorList>
            <person name="Yu Y."/>
            <person name="Rambo T."/>
            <person name="Currie J."/>
            <person name="Saski C."/>
            <person name="Kim H.-R."/>
            <person name="Collura K."/>
            <person name="Thompson S."/>
            <person name="Simmons J."/>
            <person name="Yang T.-J."/>
            <person name="Nah G."/>
            <person name="Patel A.J."/>
            <person name="Thurmond S."/>
            <person name="Henry D."/>
            <person name="Oates R."/>
            <person name="Palmer M."/>
            <person name="Pries G."/>
            <person name="Gibson J."/>
            <person name="Anderson H."/>
            <person name="Paradkar M."/>
            <person name="Crane L."/>
            <person name="Dale J."/>
            <person name="Carver M.B."/>
            <person name="Wood T."/>
            <person name="Frisch D."/>
            <person name="Engler F."/>
            <person name="Soderlund C."/>
            <person name="Palmer L.E."/>
            <person name="Teytelman L."/>
            <person name="Nascimento L."/>
            <person name="De la Bastide M."/>
            <person name="Spiegel L."/>
            <person name="Ware D."/>
            <person name="O'Shaughnessy A."/>
            <person name="Dike S."/>
            <person name="Dedhia N."/>
            <person name="Preston R."/>
            <person name="Huang E."/>
            <person name="Ferraro K."/>
            <person name="Kuit K."/>
            <person name="Miller B."/>
            <person name="Zutavern T."/>
            <person name="Katzenberger F."/>
            <person name="Muller S."/>
            <person name="Balija V."/>
            <person name="Martienssen R.A."/>
            <person name="Stein L."/>
            <person name="Minx P."/>
            <person name="Johnson D."/>
            <person name="Cordum H."/>
            <person name="Mardis E."/>
            <person name="Cheng Z."/>
            <person name="Jiang J."/>
            <person name="Wilson R."/>
            <person name="McCombie W.R."/>
            <person name="Wing R.A."/>
            <person name="Yuan Q."/>
            <person name="Ouyang S."/>
            <person name="Liu J."/>
            <person name="Jones K.M."/>
            <person name="Gansberger K."/>
            <person name="Moffat K."/>
            <person name="Hill J."/>
            <person name="Tsitrin T."/>
            <person name="Overton L."/>
            <person name="Bera J."/>
            <person name="Kim M."/>
            <person name="Jin S."/>
            <person name="Tallon L."/>
            <person name="Ciecko A."/>
            <person name="Pai G."/>
            <person name="Van Aken S."/>
            <person name="Utterback T."/>
            <person name="Reidmuller S."/>
            <person name="Bormann J."/>
            <person name="Feldblyum T."/>
            <person name="Hsiao J."/>
            <person name="Zismann V."/>
            <person name="Blunt S."/>
            <person name="de Vazeille A.R."/>
            <person name="Shaffer T."/>
            <person name="Koo H."/>
            <person name="Suh B."/>
            <person name="Yang Q."/>
            <person name="Haas B."/>
            <person name="Peterson J."/>
            <person name="Pertea M."/>
            <person name="Volfovsky N."/>
            <person name="Wortman J."/>
            <person name="White O."/>
            <person name="Salzberg S.L."/>
            <person name="Fraser C.M."/>
            <person name="Buell C.R."/>
            <person name="Messing J."/>
            <person name="Song R."/>
            <person name="Fuks G."/>
            <person name="Llaca V."/>
            <person name="Kovchak S."/>
            <person name="Young S."/>
            <person name="Bowers J.E."/>
            <person name="Paterson A.H."/>
            <person name="Johns M.A."/>
            <person name="Mao L."/>
            <person name="Pan H."/>
            <person name="Dean R.A."/>
        </authorList>
    </citation>
    <scope>NUCLEOTIDE SEQUENCE [LARGE SCALE GENOMIC DNA]</scope>
    <source>
        <strain>cv. Nipponbare</strain>
    </source>
</reference>
<reference key="2">
    <citation type="journal article" date="2005" name="Nature">
        <title>The map-based sequence of the rice genome.</title>
        <authorList>
            <consortium name="International rice genome sequencing project (IRGSP)"/>
        </authorList>
    </citation>
    <scope>NUCLEOTIDE SEQUENCE [LARGE SCALE GENOMIC DNA]</scope>
    <source>
        <strain>cv. Nipponbare</strain>
    </source>
</reference>
<reference key="3">
    <citation type="journal article" date="2008" name="Nucleic Acids Res.">
        <title>The rice annotation project database (RAP-DB): 2008 update.</title>
        <authorList>
            <consortium name="The rice annotation project (RAP)"/>
        </authorList>
    </citation>
    <scope>GENOME REANNOTATION</scope>
    <source>
        <strain>cv. Nipponbare</strain>
    </source>
</reference>
<reference key="4">
    <citation type="journal article" date="2013" name="Rice">
        <title>Improvement of the Oryza sativa Nipponbare reference genome using next generation sequence and optical map data.</title>
        <authorList>
            <person name="Kawahara Y."/>
            <person name="de la Bastide M."/>
            <person name="Hamilton J.P."/>
            <person name="Kanamori H."/>
            <person name="McCombie W.R."/>
            <person name="Ouyang S."/>
            <person name="Schwartz D.C."/>
            <person name="Tanaka T."/>
            <person name="Wu J."/>
            <person name="Zhou S."/>
            <person name="Childs K.L."/>
            <person name="Davidson R.M."/>
            <person name="Lin H."/>
            <person name="Quesada-Ocampo L."/>
            <person name="Vaillancourt B."/>
            <person name="Sakai H."/>
            <person name="Lee S.S."/>
            <person name="Kim J."/>
            <person name="Numa H."/>
            <person name="Itoh T."/>
            <person name="Buell C.R."/>
            <person name="Matsumoto T."/>
        </authorList>
    </citation>
    <scope>GENOME REANNOTATION</scope>
    <source>
        <strain>cv. Nipponbare</strain>
    </source>
</reference>
<reference key="5">
    <citation type="journal article" date="2005" name="PLoS Biol.">
        <title>The genomes of Oryza sativa: a history of duplications.</title>
        <authorList>
            <person name="Yu J."/>
            <person name="Wang J."/>
            <person name="Lin W."/>
            <person name="Li S."/>
            <person name="Li H."/>
            <person name="Zhou J."/>
            <person name="Ni P."/>
            <person name="Dong W."/>
            <person name="Hu S."/>
            <person name="Zeng C."/>
            <person name="Zhang J."/>
            <person name="Zhang Y."/>
            <person name="Li R."/>
            <person name="Xu Z."/>
            <person name="Li S."/>
            <person name="Li X."/>
            <person name="Zheng H."/>
            <person name="Cong L."/>
            <person name="Lin L."/>
            <person name="Yin J."/>
            <person name="Geng J."/>
            <person name="Li G."/>
            <person name="Shi J."/>
            <person name="Liu J."/>
            <person name="Lv H."/>
            <person name="Li J."/>
            <person name="Wang J."/>
            <person name="Deng Y."/>
            <person name="Ran L."/>
            <person name="Shi X."/>
            <person name="Wang X."/>
            <person name="Wu Q."/>
            <person name="Li C."/>
            <person name="Ren X."/>
            <person name="Wang J."/>
            <person name="Wang X."/>
            <person name="Li D."/>
            <person name="Liu D."/>
            <person name="Zhang X."/>
            <person name="Ji Z."/>
            <person name="Zhao W."/>
            <person name="Sun Y."/>
            <person name="Zhang Z."/>
            <person name="Bao J."/>
            <person name="Han Y."/>
            <person name="Dong L."/>
            <person name="Ji J."/>
            <person name="Chen P."/>
            <person name="Wu S."/>
            <person name="Liu J."/>
            <person name="Xiao Y."/>
            <person name="Bu D."/>
            <person name="Tan J."/>
            <person name="Yang L."/>
            <person name="Ye C."/>
            <person name="Zhang J."/>
            <person name="Xu J."/>
            <person name="Zhou Y."/>
            <person name="Yu Y."/>
            <person name="Zhang B."/>
            <person name="Zhuang S."/>
            <person name="Wei H."/>
            <person name="Liu B."/>
            <person name="Lei M."/>
            <person name="Yu H."/>
            <person name="Li Y."/>
            <person name="Xu H."/>
            <person name="Wei S."/>
            <person name="He X."/>
            <person name="Fang L."/>
            <person name="Zhang Z."/>
            <person name="Zhang Y."/>
            <person name="Huang X."/>
            <person name="Su Z."/>
            <person name="Tong W."/>
            <person name="Li J."/>
            <person name="Tong Z."/>
            <person name="Li S."/>
            <person name="Ye J."/>
            <person name="Wang L."/>
            <person name="Fang L."/>
            <person name="Lei T."/>
            <person name="Chen C.-S."/>
            <person name="Chen H.-C."/>
            <person name="Xu Z."/>
            <person name="Li H."/>
            <person name="Huang H."/>
            <person name="Zhang F."/>
            <person name="Xu H."/>
            <person name="Li N."/>
            <person name="Zhao C."/>
            <person name="Li S."/>
            <person name="Dong L."/>
            <person name="Huang Y."/>
            <person name="Li L."/>
            <person name="Xi Y."/>
            <person name="Qi Q."/>
            <person name="Li W."/>
            <person name="Zhang B."/>
            <person name="Hu W."/>
            <person name="Zhang Y."/>
            <person name="Tian X."/>
            <person name="Jiao Y."/>
            <person name="Liang X."/>
            <person name="Jin J."/>
            <person name="Gao L."/>
            <person name="Zheng W."/>
            <person name="Hao B."/>
            <person name="Liu S.-M."/>
            <person name="Wang W."/>
            <person name="Yuan L."/>
            <person name="Cao M."/>
            <person name="McDermott J."/>
            <person name="Samudrala R."/>
            <person name="Wang J."/>
            <person name="Wong G.K.-S."/>
            <person name="Yang H."/>
        </authorList>
    </citation>
    <scope>NUCLEOTIDE SEQUENCE [LARGE SCALE GENOMIC DNA]</scope>
    <source>
        <strain>cv. Nipponbare</strain>
    </source>
</reference>
<reference key="6">
    <citation type="journal article" date="2003" name="Science">
        <title>Collection, mapping, and annotation of over 28,000 cDNA clones from japonica rice.</title>
        <authorList>
            <consortium name="The rice full-length cDNA consortium"/>
        </authorList>
    </citation>
    <scope>NUCLEOTIDE SEQUENCE [LARGE SCALE MRNA]</scope>
    <source>
        <strain>cv. Nipponbare</strain>
    </source>
</reference>
<reference key="7">
    <citation type="journal article" date="2013" name="J. Pineal Res.">
        <title>Functional analyses of three ASMT gene family members in rice plants.</title>
        <authorList>
            <person name="Park S."/>
            <person name="Byeon Y."/>
            <person name="Back K."/>
        </authorList>
    </citation>
    <scope>FUNCTION</scope>
    <scope>CATALYTIC ACTIVITY</scope>
    <scope>TISSUE SPECIFICITY</scope>
</reference>
<reference key="8">
    <citation type="journal article" date="2014" name="J. Pineal Res.">
        <title>Cellular localization and kinetics of the rice melatonin biosynthetic enzymes SNAT and ASMT.</title>
        <authorList>
            <person name="Byeon Y."/>
            <person name="Lee H.Y."/>
            <person name="Lee K."/>
            <person name="Park S."/>
            <person name="Back K."/>
        </authorList>
    </citation>
    <scope>SUBCELLULAR LOCATION</scope>
</reference>
<evidence type="ECO:0000250" key="1">
    <source>
        <dbReference type="UniProtKB" id="F1DBB3"/>
    </source>
</evidence>
<evidence type="ECO:0000250" key="2">
    <source>
        <dbReference type="UniProtKB" id="P28002"/>
    </source>
</evidence>
<evidence type="ECO:0000250" key="3">
    <source>
        <dbReference type="UniProtKB" id="P46597"/>
    </source>
</evidence>
<evidence type="ECO:0000255" key="4">
    <source>
        <dbReference type="PROSITE-ProRule" id="PRU01020"/>
    </source>
</evidence>
<evidence type="ECO:0000269" key="5">
    <source>
    </source>
</evidence>
<evidence type="ECO:0000269" key="6">
    <source>
    </source>
</evidence>
<evidence type="ECO:0000303" key="7">
    <source>
    </source>
</evidence>
<evidence type="ECO:0000303" key="8">
    <source>
    </source>
</evidence>
<evidence type="ECO:0000305" key="9"/>
<evidence type="ECO:0000312" key="10">
    <source>
        <dbReference type="EMBL" id="AAL31649.1"/>
    </source>
</evidence>
<evidence type="ECO:0000312" key="11">
    <source>
        <dbReference type="EMBL" id="AAL34948.1"/>
    </source>
</evidence>
<evidence type="ECO:0000312" key="12">
    <source>
        <dbReference type="EMBL" id="AAP51892.1"/>
    </source>
</evidence>
<evidence type="ECO:0000312" key="13">
    <source>
        <dbReference type="EMBL" id="BAF25973.1"/>
    </source>
</evidence>
<evidence type="ECO:0000312" key="14">
    <source>
        <dbReference type="EMBL" id="EAZ15134.1"/>
    </source>
</evidence>
<comment type="function">
    <text evidence="5">Methyltransferase which catalyzes the transfer of a methyl group onto N-acetylserotonin, producing melatonin (N-acetyl-5-methoxytryptamine).</text>
</comment>
<comment type="catalytic activity">
    <reaction evidence="5">
        <text>N-acetylserotonin + S-adenosyl-L-methionine = melatonin + S-adenosyl-L-homocysteine + H(+)</text>
        <dbReference type="Rhea" id="RHEA:15573"/>
        <dbReference type="ChEBI" id="CHEBI:15378"/>
        <dbReference type="ChEBI" id="CHEBI:16796"/>
        <dbReference type="ChEBI" id="CHEBI:17697"/>
        <dbReference type="ChEBI" id="CHEBI:57856"/>
        <dbReference type="ChEBI" id="CHEBI:59789"/>
        <dbReference type="EC" id="2.1.1.4"/>
    </reaction>
</comment>
<comment type="pathway">
    <text evidence="9">Aromatic compound metabolism; melatonin biosynthesis; melatonin from serotonin: step 1/2.</text>
</comment>
<comment type="subunit">
    <text evidence="3">Homodimer.</text>
</comment>
<comment type="subcellular location">
    <subcellularLocation>
        <location evidence="6">Cytoplasm</location>
    </subcellularLocation>
</comment>
<comment type="tissue specificity">
    <text evidence="5">Expressed in roots, leaves, stems and flowers.</text>
</comment>
<comment type="similarity">
    <text evidence="9">Belongs to the class I-like SAM-binding methyltransferase superfamily. Cation-independent O-methyltransferase family.</text>
</comment>
<comment type="sequence caution" evidence="9">
    <conflict type="erroneous gene model prediction">
        <sequence resource="EMBL-CDS" id="BAT09682"/>
    </conflict>
</comment>
<keyword id="KW-0963">Cytoplasm</keyword>
<keyword id="KW-0471">Melatonin biosynthesis</keyword>
<keyword id="KW-0489">Methyltransferase</keyword>
<keyword id="KW-1185">Reference proteome</keyword>
<keyword id="KW-0949">S-adenosyl-L-methionine</keyword>
<keyword id="KW-0808">Transferase</keyword>